<proteinExistence type="inferred from homology"/>
<keyword id="KW-0963">Cytoplasm</keyword>
<keyword id="KW-0460">Magnesium</keyword>
<keyword id="KW-0479">Metal-binding</keyword>
<keyword id="KW-0548">Nucleotidyltransferase</keyword>
<keyword id="KW-0694">RNA-binding</keyword>
<keyword id="KW-0808">Transferase</keyword>
<sequence>MTFETISVTLEEGKTLVFETGKIARQANGAVLARMQETWVFSSVCAANLEEAVDFLPLRVDYQEKFSSIGKTLGGFIKREGRPTEREILTSRLIDRSMRPSLPNRLMQDIQILSYVWSYDGVTLPDPIAICGVSAALAISDIPQTSIVAGVRVGFVNNRWVVNPTKAEMDVSRMELVLAGTENAILMIEGHCDFFTEEQVIEAIEFGHKHIVTICKALKDWQKHIGKEKNTSGIVSLPEEVQSAVNTFVEGKFVDLLKIKEKKAFEAASKQLENEVIEQLQEENEVFTAFNIKIAFKQAKSNFIRGLIREQGLRSDGRSVTTIRPISIDTSFLPRTHGSCLFTRGETQTMAVCTLGSEAMAQRYEDLNGEGLAKFYLQYFFPPFSVGEVGRIGSPGRREIGHGKLAEKALSHTLPDPMKFPYTIRIESNITESNGSSSMASVCGGCLALMDAGVPIKTPIAGIAMGLILEDDHVTILSDISGLEDHLGDMDFKVAGNTEGITAFQMDIKVEGITPDIMRAALAQAKEGRQDILETMKQALAAPKTDLSQYAPRIETMQIKPNKIATVIGPGGKQIRQIIEEAGVQIDINDSGLVSISASSPQAIEKAKSIIEGLVGEVEVGKIYEGRVTSVVPFGAFVEILPGKEGLCHISEFSKQRIDNVGDFVKQGDTLTVKLLSINEKGQYKLSHKATLSE</sequence>
<feature type="chain" id="PRO_0000329582" description="Polyribonucleotide nucleotidyltransferase">
    <location>
        <begin position="1"/>
        <end position="694"/>
    </location>
</feature>
<feature type="domain" description="KH" evidence="1">
    <location>
        <begin position="552"/>
        <end position="611"/>
    </location>
</feature>
<feature type="domain" description="S1 motif" evidence="1">
    <location>
        <begin position="621"/>
        <end position="689"/>
    </location>
</feature>
<feature type="binding site" evidence="1">
    <location>
        <position position="485"/>
    </location>
    <ligand>
        <name>Mg(2+)</name>
        <dbReference type="ChEBI" id="CHEBI:18420"/>
    </ligand>
</feature>
<feature type="binding site" evidence="1">
    <location>
        <position position="491"/>
    </location>
    <ligand>
        <name>Mg(2+)</name>
        <dbReference type="ChEBI" id="CHEBI:18420"/>
    </ligand>
</feature>
<comment type="function">
    <text evidence="1">Involved in mRNA degradation. Catalyzes the phosphorolysis of single-stranded polyribonucleotides processively in the 3'- to 5'-direction.</text>
</comment>
<comment type="catalytic activity">
    <reaction evidence="1">
        <text>RNA(n+1) + phosphate = RNA(n) + a ribonucleoside 5'-diphosphate</text>
        <dbReference type="Rhea" id="RHEA:22096"/>
        <dbReference type="Rhea" id="RHEA-COMP:14527"/>
        <dbReference type="Rhea" id="RHEA-COMP:17342"/>
        <dbReference type="ChEBI" id="CHEBI:43474"/>
        <dbReference type="ChEBI" id="CHEBI:57930"/>
        <dbReference type="ChEBI" id="CHEBI:140395"/>
        <dbReference type="EC" id="2.7.7.8"/>
    </reaction>
</comment>
<comment type="cofactor">
    <cofactor evidence="1">
        <name>Mg(2+)</name>
        <dbReference type="ChEBI" id="CHEBI:18420"/>
    </cofactor>
</comment>
<comment type="subcellular location">
    <subcellularLocation>
        <location evidence="1">Cytoplasm</location>
    </subcellularLocation>
</comment>
<comment type="similarity">
    <text evidence="1">Belongs to the polyribonucleotide nucleotidyltransferase family.</text>
</comment>
<accession>Q5L5B4</accession>
<dbReference type="EC" id="2.7.7.8" evidence="1"/>
<dbReference type="EMBL" id="CR848038">
    <property type="protein sequence ID" value="CAH64177.1"/>
    <property type="molecule type" value="Genomic_DNA"/>
</dbReference>
<dbReference type="RefSeq" id="WP_011097297.1">
    <property type="nucleotide sequence ID" value="NC_004552.2"/>
</dbReference>
<dbReference type="SMR" id="Q5L5B4"/>
<dbReference type="GeneID" id="93024284"/>
<dbReference type="KEGG" id="cab:CAB730"/>
<dbReference type="eggNOG" id="COG1185">
    <property type="taxonomic scope" value="Bacteria"/>
</dbReference>
<dbReference type="HOGENOM" id="CLU_004217_2_2_0"/>
<dbReference type="OrthoDB" id="9804305at2"/>
<dbReference type="Proteomes" id="UP000001012">
    <property type="component" value="Chromosome"/>
</dbReference>
<dbReference type="GO" id="GO:0005829">
    <property type="term" value="C:cytosol"/>
    <property type="evidence" value="ECO:0007669"/>
    <property type="project" value="TreeGrafter"/>
</dbReference>
<dbReference type="GO" id="GO:0000175">
    <property type="term" value="F:3'-5'-RNA exonuclease activity"/>
    <property type="evidence" value="ECO:0007669"/>
    <property type="project" value="TreeGrafter"/>
</dbReference>
<dbReference type="GO" id="GO:0000287">
    <property type="term" value="F:magnesium ion binding"/>
    <property type="evidence" value="ECO:0007669"/>
    <property type="project" value="UniProtKB-UniRule"/>
</dbReference>
<dbReference type="GO" id="GO:0004654">
    <property type="term" value="F:polyribonucleotide nucleotidyltransferase activity"/>
    <property type="evidence" value="ECO:0007669"/>
    <property type="project" value="UniProtKB-UniRule"/>
</dbReference>
<dbReference type="GO" id="GO:0003723">
    <property type="term" value="F:RNA binding"/>
    <property type="evidence" value="ECO:0007669"/>
    <property type="project" value="UniProtKB-UniRule"/>
</dbReference>
<dbReference type="GO" id="GO:0006402">
    <property type="term" value="P:mRNA catabolic process"/>
    <property type="evidence" value="ECO:0007669"/>
    <property type="project" value="UniProtKB-UniRule"/>
</dbReference>
<dbReference type="GO" id="GO:0006396">
    <property type="term" value="P:RNA processing"/>
    <property type="evidence" value="ECO:0007669"/>
    <property type="project" value="InterPro"/>
</dbReference>
<dbReference type="CDD" id="cd02393">
    <property type="entry name" value="KH-I_PNPase"/>
    <property type="match status" value="1"/>
</dbReference>
<dbReference type="CDD" id="cd11364">
    <property type="entry name" value="RNase_PH_PNPase_2"/>
    <property type="match status" value="1"/>
</dbReference>
<dbReference type="CDD" id="cd04472">
    <property type="entry name" value="S1_PNPase"/>
    <property type="match status" value="1"/>
</dbReference>
<dbReference type="FunFam" id="3.30.1370.10:FF:000001">
    <property type="entry name" value="Polyribonucleotide nucleotidyltransferase"/>
    <property type="match status" value="1"/>
</dbReference>
<dbReference type="FunFam" id="3.30.230.70:FF:000001">
    <property type="entry name" value="Polyribonucleotide nucleotidyltransferase"/>
    <property type="match status" value="1"/>
</dbReference>
<dbReference type="FunFam" id="3.30.230.70:FF:000002">
    <property type="entry name" value="Polyribonucleotide nucleotidyltransferase"/>
    <property type="match status" value="1"/>
</dbReference>
<dbReference type="FunFam" id="2.40.50.140:FF:000189">
    <property type="entry name" value="Polyribonucleotide nucleotidyltransferase, putative"/>
    <property type="match status" value="1"/>
</dbReference>
<dbReference type="Gene3D" id="3.30.230.70">
    <property type="entry name" value="GHMP Kinase, N-terminal domain"/>
    <property type="match status" value="2"/>
</dbReference>
<dbReference type="Gene3D" id="3.30.1370.10">
    <property type="entry name" value="K Homology domain, type 1"/>
    <property type="match status" value="1"/>
</dbReference>
<dbReference type="Gene3D" id="2.40.50.140">
    <property type="entry name" value="Nucleic acid-binding proteins"/>
    <property type="match status" value="1"/>
</dbReference>
<dbReference type="HAMAP" id="MF_01595">
    <property type="entry name" value="PNPase"/>
    <property type="match status" value="1"/>
</dbReference>
<dbReference type="InterPro" id="IPR001247">
    <property type="entry name" value="ExoRNase_PH_dom1"/>
</dbReference>
<dbReference type="InterPro" id="IPR015847">
    <property type="entry name" value="ExoRNase_PH_dom2"/>
</dbReference>
<dbReference type="InterPro" id="IPR036345">
    <property type="entry name" value="ExoRNase_PH_dom2_sf"/>
</dbReference>
<dbReference type="InterPro" id="IPR004087">
    <property type="entry name" value="KH_dom"/>
</dbReference>
<dbReference type="InterPro" id="IPR004088">
    <property type="entry name" value="KH_dom_type_1"/>
</dbReference>
<dbReference type="InterPro" id="IPR036612">
    <property type="entry name" value="KH_dom_type_1_sf"/>
</dbReference>
<dbReference type="InterPro" id="IPR012340">
    <property type="entry name" value="NA-bd_OB-fold"/>
</dbReference>
<dbReference type="InterPro" id="IPR012162">
    <property type="entry name" value="PNPase"/>
</dbReference>
<dbReference type="InterPro" id="IPR027408">
    <property type="entry name" value="PNPase/RNase_PH_dom_sf"/>
</dbReference>
<dbReference type="InterPro" id="IPR015848">
    <property type="entry name" value="PNPase_PH_RNA-bd_bac/org-type"/>
</dbReference>
<dbReference type="InterPro" id="IPR036456">
    <property type="entry name" value="PNPase_PH_RNA-bd_sf"/>
</dbReference>
<dbReference type="InterPro" id="IPR020568">
    <property type="entry name" value="Ribosomal_Su5_D2-typ_SF"/>
</dbReference>
<dbReference type="InterPro" id="IPR003029">
    <property type="entry name" value="S1_domain"/>
</dbReference>
<dbReference type="NCBIfam" id="TIGR03591">
    <property type="entry name" value="polynuc_phos"/>
    <property type="match status" value="1"/>
</dbReference>
<dbReference type="NCBIfam" id="NF008805">
    <property type="entry name" value="PRK11824.1"/>
    <property type="match status" value="1"/>
</dbReference>
<dbReference type="PANTHER" id="PTHR11252">
    <property type="entry name" value="POLYRIBONUCLEOTIDE NUCLEOTIDYLTRANSFERASE"/>
    <property type="match status" value="1"/>
</dbReference>
<dbReference type="PANTHER" id="PTHR11252:SF0">
    <property type="entry name" value="POLYRIBONUCLEOTIDE NUCLEOTIDYLTRANSFERASE 1, MITOCHONDRIAL"/>
    <property type="match status" value="1"/>
</dbReference>
<dbReference type="Pfam" id="PF00013">
    <property type="entry name" value="KH_1"/>
    <property type="match status" value="1"/>
</dbReference>
<dbReference type="Pfam" id="PF03726">
    <property type="entry name" value="PNPase"/>
    <property type="match status" value="1"/>
</dbReference>
<dbReference type="Pfam" id="PF01138">
    <property type="entry name" value="RNase_PH"/>
    <property type="match status" value="2"/>
</dbReference>
<dbReference type="Pfam" id="PF03725">
    <property type="entry name" value="RNase_PH_C"/>
    <property type="match status" value="2"/>
</dbReference>
<dbReference type="Pfam" id="PF00575">
    <property type="entry name" value="S1"/>
    <property type="match status" value="1"/>
</dbReference>
<dbReference type="PIRSF" id="PIRSF005499">
    <property type="entry name" value="PNPase"/>
    <property type="match status" value="1"/>
</dbReference>
<dbReference type="SMART" id="SM00322">
    <property type="entry name" value="KH"/>
    <property type="match status" value="1"/>
</dbReference>
<dbReference type="SMART" id="SM00316">
    <property type="entry name" value="S1"/>
    <property type="match status" value="1"/>
</dbReference>
<dbReference type="SUPFAM" id="SSF54791">
    <property type="entry name" value="Eukaryotic type KH-domain (KH-domain type I)"/>
    <property type="match status" value="1"/>
</dbReference>
<dbReference type="SUPFAM" id="SSF50249">
    <property type="entry name" value="Nucleic acid-binding proteins"/>
    <property type="match status" value="1"/>
</dbReference>
<dbReference type="SUPFAM" id="SSF46915">
    <property type="entry name" value="Polynucleotide phosphorylase/guanosine pentaphosphate synthase (PNPase/GPSI), domain 3"/>
    <property type="match status" value="1"/>
</dbReference>
<dbReference type="SUPFAM" id="SSF55666">
    <property type="entry name" value="Ribonuclease PH domain 2-like"/>
    <property type="match status" value="2"/>
</dbReference>
<dbReference type="SUPFAM" id="SSF54211">
    <property type="entry name" value="Ribosomal protein S5 domain 2-like"/>
    <property type="match status" value="2"/>
</dbReference>
<dbReference type="PROSITE" id="PS50084">
    <property type="entry name" value="KH_TYPE_1"/>
    <property type="match status" value="1"/>
</dbReference>
<dbReference type="PROSITE" id="PS50126">
    <property type="entry name" value="S1"/>
    <property type="match status" value="1"/>
</dbReference>
<reference key="1">
    <citation type="journal article" date="2005" name="Genome Res.">
        <title>The Chlamydophila abortus genome sequence reveals an array of variable proteins that contribute to interspecies variation.</title>
        <authorList>
            <person name="Thomson N.R."/>
            <person name="Yeats C."/>
            <person name="Bell K."/>
            <person name="Holden M.T.G."/>
            <person name="Bentley S.D."/>
            <person name="Livingstone M."/>
            <person name="Cerdeno-Tarraga A.-M."/>
            <person name="Harris B."/>
            <person name="Doggett J."/>
            <person name="Ormond D."/>
            <person name="Mungall K."/>
            <person name="Clarke K."/>
            <person name="Feltwell T."/>
            <person name="Hance Z."/>
            <person name="Sanders M."/>
            <person name="Quail M.A."/>
            <person name="Price C."/>
            <person name="Barrell B.G."/>
            <person name="Parkhill J."/>
            <person name="Longbottom D."/>
        </authorList>
    </citation>
    <scope>NUCLEOTIDE SEQUENCE [LARGE SCALE GENOMIC DNA]</scope>
    <source>
        <strain>DSM 27085 / S26/3</strain>
    </source>
</reference>
<protein>
    <recommendedName>
        <fullName evidence="1">Polyribonucleotide nucleotidyltransferase</fullName>
        <ecNumber evidence="1">2.7.7.8</ecNumber>
    </recommendedName>
    <alternativeName>
        <fullName evidence="1">Polynucleotide phosphorylase</fullName>
        <shortName evidence="1">PNPase</shortName>
    </alternativeName>
</protein>
<organism>
    <name type="scientific">Chlamydia abortus (strain DSM 27085 / S26/3)</name>
    <name type="common">Chlamydophila abortus</name>
    <dbReference type="NCBI Taxonomy" id="218497"/>
    <lineage>
        <taxon>Bacteria</taxon>
        <taxon>Pseudomonadati</taxon>
        <taxon>Chlamydiota</taxon>
        <taxon>Chlamydiia</taxon>
        <taxon>Chlamydiales</taxon>
        <taxon>Chlamydiaceae</taxon>
        <taxon>Chlamydia/Chlamydophila group</taxon>
        <taxon>Chlamydia</taxon>
    </lineage>
</organism>
<evidence type="ECO:0000255" key="1">
    <source>
        <dbReference type="HAMAP-Rule" id="MF_01595"/>
    </source>
</evidence>
<name>PNP_CHLAB</name>
<gene>
    <name evidence="1" type="primary">pnp</name>
    <name type="ordered locus">CAB730</name>
</gene>